<sequence>MRRSLRLQGKKNFSRVYKEGSVVRSDYVVVYFLPASEQRVAVVVSKRFGNAVRRNRIRRLLLEAWQENHDHLPSGYYIILPRSSLLSVEENVWRSKVKELFHEWQWASGKNSPHCSAVL</sequence>
<comment type="function">
    <text evidence="1">RNaseP catalyzes the removal of the 5'-leader sequence from pre-tRNA to produce the mature 5'-terminus. It can also cleave other RNA substrates such as 4.5S RNA. The protein component plays an auxiliary but essential role in vivo by binding to the 5'-leader sequence and broadening the substrate specificity of the ribozyme.</text>
</comment>
<comment type="catalytic activity">
    <reaction evidence="1">
        <text>Endonucleolytic cleavage of RNA, removing 5'-extranucleotides from tRNA precursor.</text>
        <dbReference type="EC" id="3.1.26.5"/>
    </reaction>
</comment>
<comment type="subunit">
    <text evidence="1">Consists of a catalytic RNA component (M1 or rnpB) and a protein subunit.</text>
</comment>
<comment type="similarity">
    <text evidence="1">Belongs to the RnpA family.</text>
</comment>
<reference key="1">
    <citation type="submission" date="2008-08" db="EMBL/GenBank/DDBJ databases">
        <title>The complete genome sequence of Coprothermobacter proteolyticus strain ATCC 5245 / DSM 5265 / BT.</title>
        <authorList>
            <person name="Dodson R.J."/>
            <person name="Durkin A.S."/>
            <person name="Wu M."/>
            <person name="Eisen J."/>
            <person name="Sutton G."/>
        </authorList>
    </citation>
    <scope>NUCLEOTIDE SEQUENCE [LARGE SCALE GENOMIC DNA]</scope>
    <source>
        <strain>ATCC 35245 / DSM 5265 / OCM 4 / BT</strain>
    </source>
</reference>
<organism>
    <name type="scientific">Coprothermobacter proteolyticus (strain ATCC 35245 / DSM 5265 / OCM 4 / BT)</name>
    <dbReference type="NCBI Taxonomy" id="309798"/>
    <lineage>
        <taxon>Bacteria</taxon>
        <taxon>Pseudomonadati</taxon>
        <taxon>Coprothermobacterota</taxon>
        <taxon>Coprothermobacteria</taxon>
        <taxon>Coprothermobacterales</taxon>
        <taxon>Coprothermobacteraceae</taxon>
        <taxon>Coprothermobacter</taxon>
    </lineage>
</organism>
<name>RNPA_COPPD</name>
<evidence type="ECO:0000255" key="1">
    <source>
        <dbReference type="HAMAP-Rule" id="MF_00227"/>
    </source>
</evidence>
<keyword id="KW-0255">Endonuclease</keyword>
<keyword id="KW-0378">Hydrolase</keyword>
<keyword id="KW-0540">Nuclease</keyword>
<keyword id="KW-1185">Reference proteome</keyword>
<keyword id="KW-0694">RNA-binding</keyword>
<keyword id="KW-0819">tRNA processing</keyword>
<gene>
    <name evidence="1" type="primary">rnpA</name>
    <name type="ordered locus">COPRO5265_1048</name>
</gene>
<protein>
    <recommendedName>
        <fullName evidence="1">Ribonuclease P protein component</fullName>
        <shortName evidence="1">RNase P protein</shortName>
        <shortName evidence="1">RNaseP protein</shortName>
        <ecNumber evidence="1">3.1.26.5</ecNumber>
    </recommendedName>
    <alternativeName>
        <fullName evidence="1">Protein C5</fullName>
    </alternativeName>
</protein>
<proteinExistence type="inferred from homology"/>
<feature type="chain" id="PRO_1000194625" description="Ribonuclease P protein component">
    <location>
        <begin position="1"/>
        <end position="119"/>
    </location>
</feature>
<accession>B5Y9B9</accession>
<dbReference type="EC" id="3.1.26.5" evidence="1"/>
<dbReference type="EMBL" id="CP001145">
    <property type="protein sequence ID" value="ACI16779.1"/>
    <property type="molecule type" value="Genomic_DNA"/>
</dbReference>
<dbReference type="SMR" id="B5Y9B9"/>
<dbReference type="STRING" id="309798.COPRO5265_1048"/>
<dbReference type="KEGG" id="cpo:COPRO5265_1048"/>
<dbReference type="eggNOG" id="COG0594">
    <property type="taxonomic scope" value="Bacteria"/>
</dbReference>
<dbReference type="Proteomes" id="UP000001732">
    <property type="component" value="Chromosome"/>
</dbReference>
<dbReference type="GO" id="GO:0030677">
    <property type="term" value="C:ribonuclease P complex"/>
    <property type="evidence" value="ECO:0007669"/>
    <property type="project" value="TreeGrafter"/>
</dbReference>
<dbReference type="GO" id="GO:0042781">
    <property type="term" value="F:3'-tRNA processing endoribonuclease activity"/>
    <property type="evidence" value="ECO:0007669"/>
    <property type="project" value="TreeGrafter"/>
</dbReference>
<dbReference type="GO" id="GO:0004526">
    <property type="term" value="F:ribonuclease P activity"/>
    <property type="evidence" value="ECO:0007669"/>
    <property type="project" value="UniProtKB-UniRule"/>
</dbReference>
<dbReference type="GO" id="GO:0000049">
    <property type="term" value="F:tRNA binding"/>
    <property type="evidence" value="ECO:0007669"/>
    <property type="project" value="UniProtKB-UniRule"/>
</dbReference>
<dbReference type="GO" id="GO:0001682">
    <property type="term" value="P:tRNA 5'-leader removal"/>
    <property type="evidence" value="ECO:0007669"/>
    <property type="project" value="UniProtKB-UniRule"/>
</dbReference>
<dbReference type="Gene3D" id="3.30.230.10">
    <property type="match status" value="1"/>
</dbReference>
<dbReference type="HAMAP" id="MF_00227">
    <property type="entry name" value="RNase_P"/>
    <property type="match status" value="1"/>
</dbReference>
<dbReference type="InterPro" id="IPR020568">
    <property type="entry name" value="Ribosomal_Su5_D2-typ_SF"/>
</dbReference>
<dbReference type="InterPro" id="IPR014721">
    <property type="entry name" value="Ribsml_uS5_D2-typ_fold_subgr"/>
</dbReference>
<dbReference type="InterPro" id="IPR000100">
    <property type="entry name" value="RNase_P"/>
</dbReference>
<dbReference type="NCBIfam" id="TIGR00188">
    <property type="entry name" value="rnpA"/>
    <property type="match status" value="1"/>
</dbReference>
<dbReference type="PANTHER" id="PTHR33992">
    <property type="entry name" value="RIBONUCLEASE P PROTEIN COMPONENT"/>
    <property type="match status" value="1"/>
</dbReference>
<dbReference type="PANTHER" id="PTHR33992:SF1">
    <property type="entry name" value="RIBONUCLEASE P PROTEIN COMPONENT"/>
    <property type="match status" value="1"/>
</dbReference>
<dbReference type="Pfam" id="PF00825">
    <property type="entry name" value="Ribonuclease_P"/>
    <property type="match status" value="1"/>
</dbReference>
<dbReference type="SUPFAM" id="SSF54211">
    <property type="entry name" value="Ribosomal protein S5 domain 2-like"/>
    <property type="match status" value="1"/>
</dbReference>